<gene>
    <name evidence="1" type="primary">lipL</name>
    <name type="ordered locus">MCCL_1832</name>
</gene>
<evidence type="ECO:0000255" key="1">
    <source>
        <dbReference type="HAMAP-Rule" id="MF_02119"/>
    </source>
</evidence>
<evidence type="ECO:0000255" key="2">
    <source>
        <dbReference type="PROSITE-ProRule" id="PRU01067"/>
    </source>
</evidence>
<protein>
    <recommendedName>
        <fullName evidence="1">Octanoyl-[GcvH]:protein N-octanoyltransferase</fullName>
        <ecNumber evidence="1">2.3.1.204</ecNumber>
    </recommendedName>
    <alternativeName>
        <fullName evidence="1">Octanoyl-[GcvH]:E2 amidotransferase</fullName>
    </alternativeName>
</protein>
<accession>B9E8M1</accession>
<comment type="function">
    <text evidence="1">Catalyzes the amidotransfer (transamidation) of the octanoyl moiety from octanoyl-GcvH to the lipoyl domain of the E2 subunit of lipoate-dependent enzymes.</text>
</comment>
<comment type="catalytic activity">
    <reaction evidence="1">
        <text>N(6)-octanoyl-L-lysyl-[glycine-cleavage complex H protein] + L-lysyl-[lipoyl-carrier protein] = N(6)-octanoyl-L-lysyl-[lipoyl-carrier protein] + L-lysyl-[glycine-cleavage complex H protein]</text>
        <dbReference type="Rhea" id="RHEA:20213"/>
        <dbReference type="Rhea" id="RHEA-COMP:10500"/>
        <dbReference type="Rhea" id="RHEA-COMP:10501"/>
        <dbReference type="Rhea" id="RHEA-COMP:10503"/>
        <dbReference type="Rhea" id="RHEA-COMP:10504"/>
        <dbReference type="ChEBI" id="CHEBI:29969"/>
        <dbReference type="ChEBI" id="CHEBI:78809"/>
        <dbReference type="EC" id="2.3.1.204"/>
    </reaction>
</comment>
<comment type="pathway">
    <text evidence="1">Protein modification; protein lipoylation via endogenous pathway; protein N(6)-(lipoyl)lysine from octanoyl-[acyl-carrier-protein].</text>
</comment>
<comment type="miscellaneous">
    <text evidence="1">The reaction proceeds via a thioester-linked acyl-enzyme intermediate.</text>
</comment>
<comment type="similarity">
    <text evidence="1">Belongs to the octanoyltransferase LipL family.</text>
</comment>
<keyword id="KW-0012">Acyltransferase</keyword>
<keyword id="KW-1185">Reference proteome</keyword>
<keyword id="KW-0808">Transferase</keyword>
<name>LIPL_MACCJ</name>
<organism>
    <name type="scientific">Macrococcus caseolyticus (strain JCSC5402)</name>
    <name type="common">Macrococcoides caseolyticum</name>
    <dbReference type="NCBI Taxonomy" id="458233"/>
    <lineage>
        <taxon>Bacteria</taxon>
        <taxon>Bacillati</taxon>
        <taxon>Bacillota</taxon>
        <taxon>Bacilli</taxon>
        <taxon>Bacillales</taxon>
        <taxon>Staphylococcaceae</taxon>
        <taxon>Macrococcoides</taxon>
    </lineage>
</organism>
<proteinExistence type="inferred from homology"/>
<reference key="1">
    <citation type="journal article" date="2009" name="J. Bacteriol.">
        <title>Complete genome sequence of Macrococcus caseolyticus strain JCSCS5402, reflecting the ancestral genome of the human-pathogenic staphylococci.</title>
        <authorList>
            <person name="Baba T."/>
            <person name="Kuwahara-Arai K."/>
            <person name="Uchiyama I."/>
            <person name="Takeuchi F."/>
            <person name="Ito T."/>
            <person name="Hiramatsu K."/>
        </authorList>
    </citation>
    <scope>NUCLEOTIDE SEQUENCE [LARGE SCALE GENOMIC DNA]</scope>
    <source>
        <strain>JCSC5402</strain>
    </source>
</reference>
<feature type="chain" id="PRO_0000410843" description="Octanoyl-[GcvH]:protein N-octanoyltransferase">
    <location>
        <begin position="1"/>
        <end position="274"/>
    </location>
</feature>
<feature type="domain" description="BPL/LPL catalytic" evidence="2">
    <location>
        <begin position="37"/>
        <end position="242"/>
    </location>
</feature>
<feature type="active site" description="Acyl-thioester intermediate" evidence="1">
    <location>
        <position position="141"/>
    </location>
</feature>
<feature type="site" description="Lowers pKa of active site Cys" evidence="1">
    <location>
        <position position="153"/>
    </location>
</feature>
<sequence length="274" mass="30942">MTGSIFEGKWQYVDHTTGLQPMQSFSFDDMYCHLVGQGNDAVVRTWVHNHVVILGIHDARLPYLAEGIEYLNNKGYGAIVRNSGGLGVVLDAGVLNISLIFKGDISFSIDAGYEYMYELVQEMFASYGKRIEAKEITRSYCPGSYDLSIDGKKFAGISQRRVKGGIAVQIYLCIEGSGSERAELMRQFYDIALRGEVTKFHYPDIDSSCMASLEELLETELSVEEVLFKLLFAMKTLGATLSNNEMTNDMWTLYNIYFERMIERNSKLKINQEG</sequence>
<dbReference type="EC" id="2.3.1.204" evidence="1"/>
<dbReference type="EMBL" id="AP009484">
    <property type="protein sequence ID" value="BAH18539.1"/>
    <property type="molecule type" value="Genomic_DNA"/>
</dbReference>
<dbReference type="RefSeq" id="WP_015912331.1">
    <property type="nucleotide sequence ID" value="NC_011999.1"/>
</dbReference>
<dbReference type="SMR" id="B9E8M1"/>
<dbReference type="STRING" id="458233.MCCL_1832"/>
<dbReference type="KEGG" id="mcl:MCCL_1832"/>
<dbReference type="eggNOG" id="COG0095">
    <property type="taxonomic scope" value="Bacteria"/>
</dbReference>
<dbReference type="HOGENOM" id="CLU_067270_0_0_9"/>
<dbReference type="OrthoDB" id="2080934at2"/>
<dbReference type="Proteomes" id="UP000001383">
    <property type="component" value="Chromosome"/>
</dbReference>
<dbReference type="GO" id="GO:0033819">
    <property type="term" value="F:lipoyl(octanoyl) transferase activity"/>
    <property type="evidence" value="ECO:0007669"/>
    <property type="project" value="InterPro"/>
</dbReference>
<dbReference type="GO" id="GO:0009107">
    <property type="term" value="P:lipoate biosynthetic process"/>
    <property type="evidence" value="ECO:0007669"/>
    <property type="project" value="UniProtKB-UniRule"/>
</dbReference>
<dbReference type="GO" id="GO:0036211">
    <property type="term" value="P:protein modification process"/>
    <property type="evidence" value="ECO:0007669"/>
    <property type="project" value="InterPro"/>
</dbReference>
<dbReference type="CDD" id="cd16443">
    <property type="entry name" value="LplA"/>
    <property type="match status" value="1"/>
</dbReference>
<dbReference type="Gene3D" id="3.30.930.10">
    <property type="entry name" value="Bira Bifunctional Protein, Domain 2"/>
    <property type="match status" value="1"/>
</dbReference>
<dbReference type="HAMAP" id="MF_02119">
    <property type="entry name" value="LipL"/>
    <property type="match status" value="1"/>
</dbReference>
<dbReference type="InterPro" id="IPR045864">
    <property type="entry name" value="aa-tRNA-synth_II/BPL/LPL"/>
</dbReference>
<dbReference type="InterPro" id="IPR004143">
    <property type="entry name" value="BPL_LPL_catalytic"/>
</dbReference>
<dbReference type="InterPro" id="IPR024897">
    <property type="entry name" value="LipL"/>
</dbReference>
<dbReference type="InterPro" id="IPR050664">
    <property type="entry name" value="Octanoyltrans_LipM/LipL"/>
</dbReference>
<dbReference type="PANTHER" id="PTHR43679:SF2">
    <property type="entry name" value="OCTANOYL-[GCVH]:PROTEIN N-OCTANOYLTRANSFERASE"/>
    <property type="match status" value="1"/>
</dbReference>
<dbReference type="PANTHER" id="PTHR43679">
    <property type="entry name" value="OCTANOYLTRANSFERASE LIPM-RELATED"/>
    <property type="match status" value="1"/>
</dbReference>
<dbReference type="Pfam" id="PF21948">
    <property type="entry name" value="LplA-B_cat"/>
    <property type="match status" value="1"/>
</dbReference>
<dbReference type="SUPFAM" id="SSF55681">
    <property type="entry name" value="Class II aaRS and biotin synthetases"/>
    <property type="match status" value="1"/>
</dbReference>
<dbReference type="PROSITE" id="PS51733">
    <property type="entry name" value="BPL_LPL_CATALYTIC"/>
    <property type="match status" value="1"/>
</dbReference>